<protein>
    <recommendedName>
        <fullName>DegV domain-containing protein CA_C3284</fullName>
    </recommendedName>
</protein>
<organism>
    <name type="scientific">Clostridium acetobutylicum (strain ATCC 824 / DSM 792 / JCM 1419 / IAM 19013 / LMG 5710 / NBRC 13948 / NRRL B-527 / VKM B-1787 / 2291 / W)</name>
    <dbReference type="NCBI Taxonomy" id="272562"/>
    <lineage>
        <taxon>Bacteria</taxon>
        <taxon>Bacillati</taxon>
        <taxon>Bacillota</taxon>
        <taxon>Clostridia</taxon>
        <taxon>Eubacteriales</taxon>
        <taxon>Clostridiaceae</taxon>
        <taxon>Clostridium</taxon>
    </lineage>
</organism>
<gene>
    <name type="ordered locus">CA_C3284</name>
</gene>
<proteinExistence type="inferred from homology"/>
<dbReference type="EMBL" id="AE001437">
    <property type="protein sequence ID" value="AAK81218.1"/>
    <property type="molecule type" value="Genomic_DNA"/>
</dbReference>
<dbReference type="PIR" id="G97303">
    <property type="entry name" value="G97303"/>
</dbReference>
<dbReference type="RefSeq" id="NP_349878.1">
    <property type="nucleotide sequence ID" value="NC_003030.1"/>
</dbReference>
<dbReference type="RefSeq" id="WP_010966558.1">
    <property type="nucleotide sequence ID" value="NC_003030.1"/>
</dbReference>
<dbReference type="SMR" id="Q97E32"/>
<dbReference type="STRING" id="272562.CA_C3284"/>
<dbReference type="KEGG" id="cac:CA_C3284"/>
<dbReference type="PATRIC" id="fig|272562.8.peg.3462"/>
<dbReference type="eggNOG" id="COG1307">
    <property type="taxonomic scope" value="Bacteria"/>
</dbReference>
<dbReference type="HOGENOM" id="CLU_048251_3_2_9"/>
<dbReference type="OrthoDB" id="9780216at2"/>
<dbReference type="Proteomes" id="UP000000814">
    <property type="component" value="Chromosome"/>
</dbReference>
<dbReference type="GO" id="GO:0008289">
    <property type="term" value="F:lipid binding"/>
    <property type="evidence" value="ECO:0007669"/>
    <property type="project" value="UniProtKB-KW"/>
</dbReference>
<dbReference type="Gene3D" id="3.30.1180.10">
    <property type="match status" value="1"/>
</dbReference>
<dbReference type="Gene3D" id="3.40.50.10170">
    <property type="match status" value="1"/>
</dbReference>
<dbReference type="InterPro" id="IPR003797">
    <property type="entry name" value="DegV"/>
</dbReference>
<dbReference type="InterPro" id="IPR043168">
    <property type="entry name" value="DegV_C"/>
</dbReference>
<dbReference type="InterPro" id="IPR050270">
    <property type="entry name" value="DegV_domain_contain"/>
</dbReference>
<dbReference type="NCBIfam" id="TIGR00762">
    <property type="entry name" value="DegV"/>
    <property type="match status" value="1"/>
</dbReference>
<dbReference type="PANTHER" id="PTHR33434">
    <property type="entry name" value="DEGV DOMAIN-CONTAINING PROTEIN DR_1986-RELATED"/>
    <property type="match status" value="1"/>
</dbReference>
<dbReference type="PANTHER" id="PTHR33434:SF2">
    <property type="entry name" value="FATTY ACID-BINDING PROTEIN TM_1468"/>
    <property type="match status" value="1"/>
</dbReference>
<dbReference type="Pfam" id="PF02645">
    <property type="entry name" value="DegV"/>
    <property type="match status" value="1"/>
</dbReference>
<dbReference type="SUPFAM" id="SSF82549">
    <property type="entry name" value="DAK1/DegV-like"/>
    <property type="match status" value="1"/>
</dbReference>
<dbReference type="PROSITE" id="PS51482">
    <property type="entry name" value="DEGV"/>
    <property type="match status" value="1"/>
</dbReference>
<comment type="function">
    <text evidence="1">May bind long-chain fatty acids, such as palmitate, and may play a role in lipid transport or fatty acid metabolism.</text>
</comment>
<reference key="1">
    <citation type="journal article" date="2001" name="J. Bacteriol.">
        <title>Genome sequence and comparative analysis of the solvent-producing bacterium Clostridium acetobutylicum.</title>
        <authorList>
            <person name="Noelling J."/>
            <person name="Breton G."/>
            <person name="Omelchenko M.V."/>
            <person name="Makarova K.S."/>
            <person name="Zeng Q."/>
            <person name="Gibson R."/>
            <person name="Lee H.M."/>
            <person name="Dubois J."/>
            <person name="Qiu D."/>
            <person name="Hitti J."/>
            <person name="Wolf Y.I."/>
            <person name="Tatusov R.L."/>
            <person name="Sabathe F."/>
            <person name="Doucette-Stamm L.A."/>
            <person name="Soucaille P."/>
            <person name="Daly M.J."/>
            <person name="Bennett G.N."/>
            <person name="Koonin E.V."/>
            <person name="Smith D.R."/>
        </authorList>
    </citation>
    <scope>NUCLEOTIDE SEQUENCE [LARGE SCALE GENOMIC DNA]</scope>
    <source>
        <strain>ATCC 824 / DSM 792 / JCM 1419 / IAM 19013 / LMG 5710 / NBRC 13948 / NRRL B-527 / VKM B-1787 / 2291 / W</strain>
    </source>
</reference>
<sequence length="285" mass="31428">MAVKILTDSTSCMNNDLINKFHINLVSLSVSFDDESFKEKDISNEVFYEKMNEKGIPKSSQPSIEDLCSVMEEVVSVGDELLCIFISSDMSGTYSTAHIARDMVIEKYKDAKIEILDSRSNCMQLGFAAISAARAAMDGKSLEEVKLAAEENMKKSRFLFIPDNLVYLKKGGRIGGAGALIGNLLKIIPILTVEDGKTSVFAKIRTKKRAVETMVQRVLEDTDKFGMGGIAVHHINCYDEAKRLAETIKNKFKVDPIICDIGPVIGLHVGPGAIGIAYYTEKNMR</sequence>
<keyword id="KW-0446">Lipid-binding</keyword>
<keyword id="KW-1185">Reference proteome</keyword>
<feature type="chain" id="PRO_0000209756" description="DegV domain-containing protein CA_C3284">
    <location>
        <begin position="1"/>
        <end position="285"/>
    </location>
</feature>
<feature type="domain" description="DegV" evidence="3">
    <location>
        <begin position="3"/>
        <end position="280"/>
    </location>
</feature>
<feature type="binding site" evidence="2">
    <location>
        <position position="59"/>
    </location>
    <ligand>
        <name>hexadecanoate</name>
        <dbReference type="ChEBI" id="CHEBI:7896"/>
    </ligand>
</feature>
<feature type="binding site" evidence="2">
    <location>
        <position position="91"/>
    </location>
    <ligand>
        <name>hexadecanoate</name>
        <dbReference type="ChEBI" id="CHEBI:7896"/>
    </ligand>
</feature>
<evidence type="ECO:0000250" key="1"/>
<evidence type="ECO:0000250" key="2">
    <source>
        <dbReference type="UniProtKB" id="Q9X1H9"/>
    </source>
</evidence>
<evidence type="ECO:0000255" key="3">
    <source>
        <dbReference type="PROSITE-ProRule" id="PRU00815"/>
    </source>
</evidence>
<name>Y3284_CLOAB</name>
<accession>Q97E32</accession>